<accession>B7HDU2</accession>
<reference key="1">
    <citation type="submission" date="2008-10" db="EMBL/GenBank/DDBJ databases">
        <title>Genome sequence of Bacillus cereus B4264.</title>
        <authorList>
            <person name="Dodson R.J."/>
            <person name="Durkin A.S."/>
            <person name="Rosovitz M.J."/>
            <person name="Rasko D.A."/>
            <person name="Hoffmaster A."/>
            <person name="Ravel J."/>
            <person name="Sutton G."/>
        </authorList>
    </citation>
    <scope>NUCLEOTIDE SEQUENCE [LARGE SCALE GENOMIC DNA]</scope>
    <source>
        <strain>B4264</strain>
    </source>
</reference>
<gene>
    <name evidence="1" type="primary">proS</name>
    <name type="ordered locus">BCB4264_A3917</name>
</gene>
<protein>
    <recommendedName>
        <fullName evidence="1">Proline--tRNA ligase</fullName>
        <ecNumber evidence="1">6.1.1.15</ecNumber>
    </recommendedName>
    <alternativeName>
        <fullName evidence="1">Prolyl-tRNA synthetase</fullName>
        <shortName evidence="1">ProRS</shortName>
    </alternativeName>
</protein>
<proteinExistence type="inferred from homology"/>
<name>SYP_BACC4</name>
<evidence type="ECO:0000255" key="1">
    <source>
        <dbReference type="HAMAP-Rule" id="MF_01569"/>
    </source>
</evidence>
<keyword id="KW-0030">Aminoacyl-tRNA synthetase</keyword>
<keyword id="KW-0067">ATP-binding</keyword>
<keyword id="KW-0963">Cytoplasm</keyword>
<keyword id="KW-0436">Ligase</keyword>
<keyword id="KW-0547">Nucleotide-binding</keyword>
<keyword id="KW-0648">Protein biosynthesis</keyword>
<comment type="function">
    <text evidence="1">Catalyzes the attachment of proline to tRNA(Pro) in a two-step reaction: proline is first activated by ATP to form Pro-AMP and then transferred to the acceptor end of tRNA(Pro). As ProRS can inadvertently accommodate and process non-cognate amino acids such as alanine and cysteine, to avoid such errors it has two additional distinct editing activities against alanine. One activity is designated as 'pretransfer' editing and involves the tRNA(Pro)-independent hydrolysis of activated Ala-AMP. The other activity is designated 'posttransfer' editing and involves deacylation of mischarged Ala-tRNA(Pro). The misacylated Cys-tRNA(Pro) is not edited by ProRS.</text>
</comment>
<comment type="catalytic activity">
    <reaction evidence="1">
        <text>tRNA(Pro) + L-proline + ATP = L-prolyl-tRNA(Pro) + AMP + diphosphate</text>
        <dbReference type="Rhea" id="RHEA:14305"/>
        <dbReference type="Rhea" id="RHEA-COMP:9700"/>
        <dbReference type="Rhea" id="RHEA-COMP:9702"/>
        <dbReference type="ChEBI" id="CHEBI:30616"/>
        <dbReference type="ChEBI" id="CHEBI:33019"/>
        <dbReference type="ChEBI" id="CHEBI:60039"/>
        <dbReference type="ChEBI" id="CHEBI:78442"/>
        <dbReference type="ChEBI" id="CHEBI:78532"/>
        <dbReference type="ChEBI" id="CHEBI:456215"/>
        <dbReference type="EC" id="6.1.1.15"/>
    </reaction>
</comment>
<comment type="subunit">
    <text evidence="1">Homodimer.</text>
</comment>
<comment type="subcellular location">
    <subcellularLocation>
        <location evidence="1">Cytoplasm</location>
    </subcellularLocation>
</comment>
<comment type="domain">
    <text evidence="1">Consists of three domains: the N-terminal catalytic domain, the editing domain and the C-terminal anticodon-binding domain.</text>
</comment>
<comment type="similarity">
    <text evidence="1">Belongs to the class-II aminoacyl-tRNA synthetase family. ProS type 1 subfamily.</text>
</comment>
<dbReference type="EC" id="6.1.1.15" evidence="1"/>
<dbReference type="EMBL" id="CP001176">
    <property type="protein sequence ID" value="ACK63912.1"/>
    <property type="molecule type" value="Genomic_DNA"/>
</dbReference>
<dbReference type="RefSeq" id="WP_000814300.1">
    <property type="nucleotide sequence ID" value="NC_011725.1"/>
</dbReference>
<dbReference type="SMR" id="B7HDU2"/>
<dbReference type="KEGG" id="bcb:BCB4264_A3917"/>
<dbReference type="HOGENOM" id="CLU_016739_0_0_9"/>
<dbReference type="Proteomes" id="UP000007096">
    <property type="component" value="Chromosome"/>
</dbReference>
<dbReference type="GO" id="GO:0005829">
    <property type="term" value="C:cytosol"/>
    <property type="evidence" value="ECO:0007669"/>
    <property type="project" value="TreeGrafter"/>
</dbReference>
<dbReference type="GO" id="GO:0002161">
    <property type="term" value="F:aminoacyl-tRNA deacylase activity"/>
    <property type="evidence" value="ECO:0007669"/>
    <property type="project" value="InterPro"/>
</dbReference>
<dbReference type="GO" id="GO:0005524">
    <property type="term" value="F:ATP binding"/>
    <property type="evidence" value="ECO:0007669"/>
    <property type="project" value="UniProtKB-UniRule"/>
</dbReference>
<dbReference type="GO" id="GO:0140096">
    <property type="term" value="F:catalytic activity, acting on a protein"/>
    <property type="evidence" value="ECO:0007669"/>
    <property type="project" value="UniProtKB-ARBA"/>
</dbReference>
<dbReference type="GO" id="GO:0004827">
    <property type="term" value="F:proline-tRNA ligase activity"/>
    <property type="evidence" value="ECO:0007669"/>
    <property type="project" value="UniProtKB-UniRule"/>
</dbReference>
<dbReference type="GO" id="GO:0016740">
    <property type="term" value="F:transferase activity"/>
    <property type="evidence" value="ECO:0007669"/>
    <property type="project" value="UniProtKB-ARBA"/>
</dbReference>
<dbReference type="GO" id="GO:0006433">
    <property type="term" value="P:prolyl-tRNA aminoacylation"/>
    <property type="evidence" value="ECO:0007669"/>
    <property type="project" value="UniProtKB-UniRule"/>
</dbReference>
<dbReference type="CDD" id="cd04334">
    <property type="entry name" value="ProRS-INS"/>
    <property type="match status" value="1"/>
</dbReference>
<dbReference type="CDD" id="cd00861">
    <property type="entry name" value="ProRS_anticodon_short"/>
    <property type="match status" value="1"/>
</dbReference>
<dbReference type="CDD" id="cd00779">
    <property type="entry name" value="ProRS_core_prok"/>
    <property type="match status" value="1"/>
</dbReference>
<dbReference type="FunFam" id="3.30.930.10:FF:000043">
    <property type="entry name" value="Proline--tRNA ligase"/>
    <property type="match status" value="1"/>
</dbReference>
<dbReference type="FunFam" id="3.30.930.10:FF:000065">
    <property type="entry name" value="Proline--tRNA ligase"/>
    <property type="match status" value="1"/>
</dbReference>
<dbReference type="FunFam" id="3.40.50.800:FF:000011">
    <property type="entry name" value="Proline--tRNA ligase"/>
    <property type="match status" value="1"/>
</dbReference>
<dbReference type="Gene3D" id="3.40.50.800">
    <property type="entry name" value="Anticodon-binding domain"/>
    <property type="match status" value="1"/>
</dbReference>
<dbReference type="Gene3D" id="3.30.930.10">
    <property type="entry name" value="Bira Bifunctional Protein, Domain 2"/>
    <property type="match status" value="2"/>
</dbReference>
<dbReference type="HAMAP" id="MF_01569">
    <property type="entry name" value="Pro_tRNA_synth_type1"/>
    <property type="match status" value="1"/>
</dbReference>
<dbReference type="InterPro" id="IPR002314">
    <property type="entry name" value="aa-tRNA-synt_IIb"/>
</dbReference>
<dbReference type="InterPro" id="IPR006195">
    <property type="entry name" value="aa-tRNA-synth_II"/>
</dbReference>
<dbReference type="InterPro" id="IPR045864">
    <property type="entry name" value="aa-tRNA-synth_II/BPL/LPL"/>
</dbReference>
<dbReference type="InterPro" id="IPR004154">
    <property type="entry name" value="Anticodon-bd"/>
</dbReference>
<dbReference type="InterPro" id="IPR036621">
    <property type="entry name" value="Anticodon-bd_dom_sf"/>
</dbReference>
<dbReference type="InterPro" id="IPR002316">
    <property type="entry name" value="Pro-tRNA-ligase_IIa"/>
</dbReference>
<dbReference type="InterPro" id="IPR004500">
    <property type="entry name" value="Pro-tRNA-synth_IIa_bac-type"/>
</dbReference>
<dbReference type="InterPro" id="IPR023717">
    <property type="entry name" value="Pro-tRNA-Synthase_IIa_type1"/>
</dbReference>
<dbReference type="InterPro" id="IPR050062">
    <property type="entry name" value="Pro-tRNA_synthetase"/>
</dbReference>
<dbReference type="InterPro" id="IPR044140">
    <property type="entry name" value="ProRS_anticodon_short"/>
</dbReference>
<dbReference type="InterPro" id="IPR033730">
    <property type="entry name" value="ProRS_core_prok"/>
</dbReference>
<dbReference type="InterPro" id="IPR036754">
    <property type="entry name" value="YbaK/aa-tRNA-synt-asso_dom_sf"/>
</dbReference>
<dbReference type="InterPro" id="IPR007214">
    <property type="entry name" value="YbaK/aa-tRNA-synth-assoc-dom"/>
</dbReference>
<dbReference type="NCBIfam" id="NF006625">
    <property type="entry name" value="PRK09194.1"/>
    <property type="match status" value="1"/>
</dbReference>
<dbReference type="NCBIfam" id="TIGR00409">
    <property type="entry name" value="proS_fam_II"/>
    <property type="match status" value="1"/>
</dbReference>
<dbReference type="PANTHER" id="PTHR42753">
    <property type="entry name" value="MITOCHONDRIAL RIBOSOME PROTEIN L39/PROLYL-TRNA LIGASE FAMILY MEMBER"/>
    <property type="match status" value="1"/>
</dbReference>
<dbReference type="PANTHER" id="PTHR42753:SF2">
    <property type="entry name" value="PROLINE--TRNA LIGASE"/>
    <property type="match status" value="1"/>
</dbReference>
<dbReference type="Pfam" id="PF03129">
    <property type="entry name" value="HGTP_anticodon"/>
    <property type="match status" value="1"/>
</dbReference>
<dbReference type="Pfam" id="PF00587">
    <property type="entry name" value="tRNA-synt_2b"/>
    <property type="match status" value="1"/>
</dbReference>
<dbReference type="Pfam" id="PF04073">
    <property type="entry name" value="tRNA_edit"/>
    <property type="match status" value="1"/>
</dbReference>
<dbReference type="PIRSF" id="PIRSF001535">
    <property type="entry name" value="ProRS_1"/>
    <property type="match status" value="1"/>
</dbReference>
<dbReference type="PRINTS" id="PR01046">
    <property type="entry name" value="TRNASYNTHPRO"/>
</dbReference>
<dbReference type="SUPFAM" id="SSF52954">
    <property type="entry name" value="Class II aaRS ABD-related"/>
    <property type="match status" value="1"/>
</dbReference>
<dbReference type="SUPFAM" id="SSF55681">
    <property type="entry name" value="Class II aaRS and biotin synthetases"/>
    <property type="match status" value="1"/>
</dbReference>
<dbReference type="SUPFAM" id="SSF55826">
    <property type="entry name" value="YbaK/ProRS associated domain"/>
    <property type="match status" value="1"/>
</dbReference>
<dbReference type="PROSITE" id="PS50862">
    <property type="entry name" value="AA_TRNA_LIGASE_II"/>
    <property type="match status" value="1"/>
</dbReference>
<organism>
    <name type="scientific">Bacillus cereus (strain B4264)</name>
    <dbReference type="NCBI Taxonomy" id="405532"/>
    <lineage>
        <taxon>Bacteria</taxon>
        <taxon>Bacillati</taxon>
        <taxon>Bacillota</taxon>
        <taxon>Bacilli</taxon>
        <taxon>Bacillales</taxon>
        <taxon>Bacillaceae</taxon>
        <taxon>Bacillus</taxon>
        <taxon>Bacillus cereus group</taxon>
    </lineage>
</organism>
<feature type="chain" id="PRO_1000199353" description="Proline--tRNA ligase">
    <location>
        <begin position="1"/>
        <end position="566"/>
    </location>
</feature>
<sequence length="566" mass="63035">MKQSMVFSPTLREVPADAEIKSHQLLLRAGFMRQNASGIYSFLPFGLKVLHKVERIVREEMERAGAVELLMPAMQAAELWQESGRWYSYGSELMRMKDRNAREFALGATHEEVITDLVRDEVKSYKKLPLTLYQIQTKFRDEQRPRFGLLRGREFLMKDAYSFHATQESLDEVYDRLYKAYSNIFARCGLNFRAVIADSGAMGGKDTHEFMVLSDVGEDTIAYSDTSDYAANIEMAPVVATYTKSDEAEKALEKVATPDQKAIEEVSAFLNIAADKCIKSMVFKVDEKLVVVLVRGDHEVNDVKVKNVYGASVVELASHEEVKALLNCEVGSLGPINVTGDIEIIADHAVASIVNGCSGANEEGFHYVNVNPERDFKVSQYTDLRFIQEGDQSPDGNGTILFARGIEVGHVFKLGTRYSEAMNATFLDENGKTQPLIMGCYGIGVSRTVAAIAEQFNDENGLVWPKAVAPFHVHVIPVNMKSDAQREMGENIYNSLQEQGYEVLLDDRAERAGVKFADADLFGLPVRVTVGKKADEGIVEVKVRATGESEEVNVEELQTYIANILK</sequence>